<protein>
    <recommendedName>
        <fullName evidence="4">DNA replication licensing factor mcm5-B</fullName>
        <shortName>xMCM5-B</shortName>
        <ecNumber>3.6.4.12</ecNumber>
    </recommendedName>
    <alternativeName>
        <fullName>CDC46 homolog B</fullName>
        <shortName>xCDC46-B</shortName>
    </alternativeName>
</protein>
<comment type="function">
    <text evidence="1">Acts as a component of the MCM2-7 complex (MCM complex) which is the replicative helicase essential for 'once per cell cycle' DNA replication initiation and elongation in eukaryotic cells. Core component of CDC45-MCM-GINS (CMG) helicase, the molecular machine that unwinds template DNA during replication, and around which the replisome is built. The active ATPase sites in the MCM2-7 ring are formed through the interaction surfaces of two neighboring subunits such that a critical structure of a conserved arginine finger motif is provided in trans relative to the ATP-binding site of the Walker A box of the adjacent subunit. The six ATPase active sites, however, are likely to contribute differentially to the complex helicase activity.</text>
</comment>
<comment type="catalytic activity">
    <reaction evidence="1">
        <text>ATP + H2O = ADP + phosphate + H(+)</text>
        <dbReference type="Rhea" id="RHEA:13065"/>
        <dbReference type="ChEBI" id="CHEBI:15377"/>
        <dbReference type="ChEBI" id="CHEBI:15378"/>
        <dbReference type="ChEBI" id="CHEBI:30616"/>
        <dbReference type="ChEBI" id="CHEBI:43474"/>
        <dbReference type="ChEBI" id="CHEBI:456216"/>
        <dbReference type="EC" id="3.6.4.12"/>
    </reaction>
    <physiologicalReaction direction="left-to-right" evidence="1">
        <dbReference type="Rhea" id="RHEA:13066"/>
    </physiologicalReaction>
</comment>
<comment type="subunit">
    <text evidence="2">Component of the mcm2-7 complex (RLF-M). The complex forms a toroidal hexameric ring with the proposed subunit order mcm2-mcm6-mcm4-mcm7-mcm3-mcm5. The heterodimer of mmcm3/mcm5 interacts with mcm4, mmcm6, mcm7 and weakly with mcm2. Component of the CMG helicase complex, composed of the mcm2-7 complex, the GINS complex and cdc45.</text>
</comment>
<comment type="subcellular location">
    <subcellularLocation>
        <location evidence="2">Nucleus</location>
    </subcellularLocation>
    <subcellularLocation>
        <location evidence="2">Chromosome</location>
    </subcellularLocation>
    <text evidence="2">Associated with chromatin before the formation of nuclei and detaches from it as DNA replication progresses.</text>
</comment>
<comment type="similarity">
    <text evidence="3">Belongs to the MCM family.</text>
</comment>
<sequence length="735" mass="82505">MSGFDDLGIYYSDSFGGEQPVGDDGQAKKSQLKKRFREFLRQYRVGTDRTGFTFKYRDELKRHYNLGEYWIEVEMEDLASFDEDLADYLYKQPTEHLQLLEEAAQEVADEVTRPRPAGEETIQEIQVMLRSDANPANIRNLKSEQMSHLVKIPGIIIAATAVRAKATKISIQCRSCRNTIGNIAVRPGLEGYAMPRKCNTEQAGRPKCPLDPYFIIPDKCKCVDFQTLKLQESPDAVPHGELPRHMQLYCDRYLCDKVVPGNRVTIMGIYSIQKSGKTSTKGRDRVGVGIRSSYIRVVGIQVDTEGTGRSAAGTITPQEEEEFRRLAVKPDIYETVAKSIAPSIYGSTDIKKAIACLLFGGSRKRLPDGLTRRGDVNLLMLGDPGTAKSQLLKFVERCSPIGVYTSGKGSSAAGLTASVMRDPVSRNFIMEGGAMVLADGGVVCIDEFDKMREDDRVAIHEAMEQQTISIAKAGITTTLNSRCSVLAAANSVYGRWDDTKGEENIDFMPTILSRFDMIFIVKDEHNEQRDMTLAKHVMNVHLSARTQSSSVEGEVDLNTLKKFIAYCRAKCGPRLSAEAAEKLKNRYILMRSGARDHERETEKRSSIPITVRQLEAVVRISESLGKMKLQPFVTETDVEEALRLFQVSTLDAAMSGSLSGVEGFSTQEDQEMLSRIEKQLKRRFAIGSQVSEHSIIQDFLKQKYPEHAIHKVLNLMMRRGEIHHRLQRKVLYRLK</sequence>
<name>MCM5B_XENLA</name>
<reference evidence="5" key="1">
    <citation type="submission" date="2003-10" db="EMBL/GenBank/DDBJ databases">
        <authorList>
            <consortium name="NIH - Xenopus Gene Collection (XGC) project"/>
        </authorList>
    </citation>
    <scope>NUCLEOTIDE SEQUENCE [LARGE SCALE MRNA]</scope>
    <source>
        <tissue evidence="5">Embryo</tissue>
    </source>
</reference>
<keyword id="KW-0067">ATP-binding</keyword>
<keyword id="KW-0131">Cell cycle</keyword>
<keyword id="KW-0158">Chromosome</keyword>
<keyword id="KW-0235">DNA replication</keyword>
<keyword id="KW-0238">DNA-binding</keyword>
<keyword id="KW-0347">Helicase</keyword>
<keyword id="KW-0378">Hydrolase</keyword>
<keyword id="KW-0547">Nucleotide-binding</keyword>
<keyword id="KW-0539">Nucleus</keyword>
<keyword id="KW-1185">Reference proteome</keyword>
<evidence type="ECO:0000250" key="1">
    <source>
        <dbReference type="UniProtKB" id="P33992"/>
    </source>
</evidence>
<evidence type="ECO:0000250" key="2">
    <source>
        <dbReference type="UniProtKB" id="P55862"/>
    </source>
</evidence>
<evidence type="ECO:0000255" key="3"/>
<evidence type="ECO:0000305" key="4"/>
<evidence type="ECO:0000312" key="5">
    <source>
        <dbReference type="EMBL" id="AAH59310.1"/>
    </source>
</evidence>
<accession>Q6PCI7</accession>
<gene>
    <name type="primary">mcm5-b</name>
</gene>
<dbReference type="EC" id="3.6.4.12"/>
<dbReference type="EMBL" id="BC059310">
    <property type="protein sequence ID" value="AAH59310.1"/>
    <property type="molecule type" value="mRNA"/>
</dbReference>
<dbReference type="RefSeq" id="NP_001080009.1">
    <property type="nucleotide sequence ID" value="NM_001086540.1"/>
</dbReference>
<dbReference type="SMR" id="Q6PCI7"/>
<dbReference type="DNASU" id="379699"/>
<dbReference type="GeneID" id="379699"/>
<dbReference type="KEGG" id="xla:379699"/>
<dbReference type="AGR" id="Xenbase:XB-GENE-985671"/>
<dbReference type="CTD" id="379699"/>
<dbReference type="Xenbase" id="XB-GENE-985671">
    <property type="gene designation" value="mcm5.S"/>
</dbReference>
<dbReference type="OMA" id="IKELYCQ"/>
<dbReference type="OrthoDB" id="10036721at2759"/>
<dbReference type="Proteomes" id="UP000186698">
    <property type="component" value="Chromosome 4S"/>
</dbReference>
<dbReference type="Bgee" id="379699">
    <property type="expression patterns" value="Expressed in neurula embryo and 19 other cell types or tissues"/>
</dbReference>
<dbReference type="GO" id="GO:0000785">
    <property type="term" value="C:chromatin"/>
    <property type="evidence" value="ECO:0000250"/>
    <property type="project" value="UniProtKB"/>
</dbReference>
<dbReference type="GO" id="GO:0071162">
    <property type="term" value="C:CMG complex"/>
    <property type="evidence" value="ECO:0000250"/>
    <property type="project" value="UniProtKB"/>
</dbReference>
<dbReference type="GO" id="GO:0042555">
    <property type="term" value="C:MCM complex"/>
    <property type="evidence" value="ECO:0000250"/>
    <property type="project" value="UniProtKB"/>
</dbReference>
<dbReference type="GO" id="GO:0005634">
    <property type="term" value="C:nucleus"/>
    <property type="evidence" value="ECO:0000318"/>
    <property type="project" value="GO_Central"/>
</dbReference>
<dbReference type="GO" id="GO:0043138">
    <property type="term" value="F:3'-5' DNA helicase activity"/>
    <property type="evidence" value="ECO:0007669"/>
    <property type="project" value="TreeGrafter"/>
</dbReference>
<dbReference type="GO" id="GO:0005524">
    <property type="term" value="F:ATP binding"/>
    <property type="evidence" value="ECO:0007669"/>
    <property type="project" value="UniProtKB-KW"/>
</dbReference>
<dbReference type="GO" id="GO:0016887">
    <property type="term" value="F:ATP hydrolysis activity"/>
    <property type="evidence" value="ECO:0007669"/>
    <property type="project" value="RHEA"/>
</dbReference>
<dbReference type="GO" id="GO:0003688">
    <property type="term" value="F:DNA replication origin binding"/>
    <property type="evidence" value="ECO:0007669"/>
    <property type="project" value="InterPro"/>
</dbReference>
<dbReference type="GO" id="GO:0003697">
    <property type="term" value="F:single-stranded DNA binding"/>
    <property type="evidence" value="ECO:0000318"/>
    <property type="project" value="GO_Central"/>
</dbReference>
<dbReference type="GO" id="GO:0017116">
    <property type="term" value="F:single-stranded DNA helicase activity"/>
    <property type="evidence" value="ECO:0007669"/>
    <property type="project" value="TreeGrafter"/>
</dbReference>
<dbReference type="GO" id="GO:0044786">
    <property type="term" value="P:cell cycle DNA replication"/>
    <property type="evidence" value="ECO:0000250"/>
    <property type="project" value="UniProtKB"/>
</dbReference>
<dbReference type="GO" id="GO:0006270">
    <property type="term" value="P:DNA replication initiation"/>
    <property type="evidence" value="ECO:0000318"/>
    <property type="project" value="GO_Central"/>
</dbReference>
<dbReference type="GO" id="GO:0000727">
    <property type="term" value="P:double-strand break repair via break-induced replication"/>
    <property type="evidence" value="ECO:0000318"/>
    <property type="project" value="GO_Central"/>
</dbReference>
<dbReference type="GO" id="GO:0030174">
    <property type="term" value="P:regulation of DNA-templated DNA replication initiation"/>
    <property type="evidence" value="ECO:0000250"/>
    <property type="project" value="UniProtKB"/>
</dbReference>
<dbReference type="CDD" id="cd17756">
    <property type="entry name" value="MCM5"/>
    <property type="match status" value="1"/>
</dbReference>
<dbReference type="FunFam" id="2.20.28.10:FF:000005">
    <property type="entry name" value="DNA helicase"/>
    <property type="match status" value="1"/>
</dbReference>
<dbReference type="FunFam" id="3.30.1640.10:FF:000006">
    <property type="entry name" value="DNA helicase"/>
    <property type="match status" value="1"/>
</dbReference>
<dbReference type="FunFam" id="3.40.50.300:FF:000241">
    <property type="entry name" value="DNA helicase"/>
    <property type="match status" value="1"/>
</dbReference>
<dbReference type="Gene3D" id="2.20.28.10">
    <property type="match status" value="1"/>
</dbReference>
<dbReference type="Gene3D" id="3.30.1640.10">
    <property type="entry name" value="mini-chromosome maintenance (MCM) complex, chain A, domain 1"/>
    <property type="match status" value="1"/>
</dbReference>
<dbReference type="Gene3D" id="2.40.50.140">
    <property type="entry name" value="Nucleic acid-binding proteins"/>
    <property type="match status" value="1"/>
</dbReference>
<dbReference type="Gene3D" id="3.40.50.300">
    <property type="entry name" value="P-loop containing nucleotide triphosphate hydrolases"/>
    <property type="match status" value="1"/>
</dbReference>
<dbReference type="InterPro" id="IPR031327">
    <property type="entry name" value="MCM"/>
</dbReference>
<dbReference type="InterPro" id="IPR008048">
    <property type="entry name" value="MCM5"/>
</dbReference>
<dbReference type="InterPro" id="IPR054125">
    <property type="entry name" value="MCM5_C"/>
</dbReference>
<dbReference type="InterPro" id="IPR018525">
    <property type="entry name" value="MCM_CS"/>
</dbReference>
<dbReference type="InterPro" id="IPR001208">
    <property type="entry name" value="MCM_dom"/>
</dbReference>
<dbReference type="InterPro" id="IPR041562">
    <property type="entry name" value="MCM_lid"/>
</dbReference>
<dbReference type="InterPro" id="IPR027925">
    <property type="entry name" value="MCM_N"/>
</dbReference>
<dbReference type="InterPro" id="IPR033762">
    <property type="entry name" value="MCM_OB"/>
</dbReference>
<dbReference type="InterPro" id="IPR012340">
    <property type="entry name" value="NA-bd_OB-fold"/>
</dbReference>
<dbReference type="InterPro" id="IPR027417">
    <property type="entry name" value="P-loop_NTPase"/>
</dbReference>
<dbReference type="PANTHER" id="PTHR11630">
    <property type="entry name" value="DNA REPLICATION LICENSING FACTOR MCM FAMILY MEMBER"/>
    <property type="match status" value="1"/>
</dbReference>
<dbReference type="PANTHER" id="PTHR11630:SF42">
    <property type="entry name" value="DNA REPLICATION LICENSING FACTOR MCM5"/>
    <property type="match status" value="1"/>
</dbReference>
<dbReference type="Pfam" id="PF00493">
    <property type="entry name" value="MCM"/>
    <property type="match status" value="1"/>
</dbReference>
<dbReference type="Pfam" id="PF21933">
    <property type="entry name" value="MCM5_C"/>
    <property type="match status" value="1"/>
</dbReference>
<dbReference type="Pfam" id="PF17855">
    <property type="entry name" value="MCM_lid"/>
    <property type="match status" value="1"/>
</dbReference>
<dbReference type="Pfam" id="PF14551">
    <property type="entry name" value="MCM_N"/>
    <property type="match status" value="1"/>
</dbReference>
<dbReference type="Pfam" id="PF17207">
    <property type="entry name" value="MCM_OB"/>
    <property type="match status" value="1"/>
</dbReference>
<dbReference type="PRINTS" id="PR01657">
    <property type="entry name" value="MCMFAMILY"/>
</dbReference>
<dbReference type="PRINTS" id="PR01661">
    <property type="entry name" value="MCMPROTEIN5"/>
</dbReference>
<dbReference type="SMART" id="SM00350">
    <property type="entry name" value="MCM"/>
    <property type="match status" value="1"/>
</dbReference>
<dbReference type="SUPFAM" id="SSF50249">
    <property type="entry name" value="Nucleic acid-binding proteins"/>
    <property type="match status" value="1"/>
</dbReference>
<dbReference type="SUPFAM" id="SSF52540">
    <property type="entry name" value="P-loop containing nucleoside triphosphate hydrolases"/>
    <property type="match status" value="1"/>
</dbReference>
<dbReference type="PROSITE" id="PS00847">
    <property type="entry name" value="MCM_1"/>
    <property type="match status" value="1"/>
</dbReference>
<dbReference type="PROSITE" id="PS50051">
    <property type="entry name" value="MCM_2"/>
    <property type="match status" value="1"/>
</dbReference>
<feature type="chain" id="PRO_0000239940" description="DNA replication licensing factor mcm5-B">
    <location>
        <begin position="1"/>
        <end position="735"/>
    </location>
</feature>
<feature type="domain" description="MCM" evidence="3">
    <location>
        <begin position="332"/>
        <end position="538"/>
    </location>
</feature>
<feature type="short sequence motif" description="Arginine finger">
    <location>
        <begin position="513"/>
        <end position="516"/>
    </location>
</feature>
<feature type="binding site" evidence="1">
    <location>
        <position position="372"/>
    </location>
    <ligand>
        <name>ADP</name>
        <dbReference type="ChEBI" id="CHEBI:456216"/>
        <note>ligand shared with MCM3</note>
    </ligand>
</feature>
<proteinExistence type="evidence at transcript level"/>
<organism>
    <name type="scientific">Xenopus laevis</name>
    <name type="common">African clawed frog</name>
    <dbReference type="NCBI Taxonomy" id="8355"/>
    <lineage>
        <taxon>Eukaryota</taxon>
        <taxon>Metazoa</taxon>
        <taxon>Chordata</taxon>
        <taxon>Craniata</taxon>
        <taxon>Vertebrata</taxon>
        <taxon>Euteleostomi</taxon>
        <taxon>Amphibia</taxon>
        <taxon>Batrachia</taxon>
        <taxon>Anura</taxon>
        <taxon>Pipoidea</taxon>
        <taxon>Pipidae</taxon>
        <taxon>Xenopodinae</taxon>
        <taxon>Xenopus</taxon>
        <taxon>Xenopus</taxon>
    </lineage>
</organism>